<feature type="chain" id="PRO_0000105106" description="Mannose/glucose-specific lectin alpha chain">
    <location>
        <begin position="1"/>
        <end position="55"/>
    </location>
</feature>
<feature type="sequence variant">
    <original>G</original>
    <variation>D</variation>
    <location>
        <position position="47"/>
    </location>
</feature>
<organism>
    <name type="scientific">Lathyrus sativus</name>
    <name type="common">White vetchling</name>
    <dbReference type="NCBI Taxonomy" id="3860"/>
    <lineage>
        <taxon>Eukaryota</taxon>
        <taxon>Viridiplantae</taxon>
        <taxon>Streptophyta</taxon>
        <taxon>Embryophyta</taxon>
        <taxon>Tracheophyta</taxon>
        <taxon>Spermatophyta</taxon>
        <taxon>Magnoliopsida</taxon>
        <taxon>eudicotyledons</taxon>
        <taxon>Gunneridae</taxon>
        <taxon>Pentapetalae</taxon>
        <taxon>rosids</taxon>
        <taxon>fabids</taxon>
        <taxon>Fabales</taxon>
        <taxon>Fabaceae</taxon>
        <taxon>Papilionoideae</taxon>
        <taxon>50 kb inversion clade</taxon>
        <taxon>NPAAA clade</taxon>
        <taxon>Hologalegina</taxon>
        <taxon>IRL clade</taxon>
        <taxon>Fabeae</taxon>
        <taxon>Lathyrus</taxon>
    </lineage>
</organism>
<protein>
    <recommendedName>
        <fullName>Mannose/glucose-specific lectin alpha chain</fullName>
    </recommendedName>
</protein>
<dbReference type="PIR" id="A25988">
    <property type="entry name" value="A25988"/>
</dbReference>
<dbReference type="GO" id="GO:0005537">
    <property type="term" value="F:D-mannose binding"/>
    <property type="evidence" value="ECO:0007669"/>
    <property type="project" value="UniProtKB-KW"/>
</dbReference>
<dbReference type="Gene3D" id="2.60.120.200">
    <property type="match status" value="1"/>
</dbReference>
<dbReference type="InterPro" id="IPR013320">
    <property type="entry name" value="ConA-like_dom_sf"/>
</dbReference>
<dbReference type="InterPro" id="IPR000985">
    <property type="entry name" value="Lectin_LegA_CS"/>
</dbReference>
<dbReference type="InterPro" id="IPR001220">
    <property type="entry name" value="Legume_lectin_dom"/>
</dbReference>
<dbReference type="Pfam" id="PF00139">
    <property type="entry name" value="Lectin_legB"/>
    <property type="match status" value="1"/>
</dbReference>
<dbReference type="SUPFAM" id="SSF49899">
    <property type="entry name" value="Concanavalin A-like lectins/glucanases"/>
    <property type="match status" value="1"/>
</dbReference>
<dbReference type="PROSITE" id="PS00308">
    <property type="entry name" value="LECTIN_LEGUME_ALPHA"/>
    <property type="match status" value="1"/>
</dbReference>
<name>LECA_LATSA</name>
<proteinExistence type="evidence at protein level"/>
<reference key="1">
    <citation type="journal article" date="1983" name="Hoppe-Seyler's Z. Physiol. Chem.">
        <title>The primary structure of the alpha chain of a mitogenic lectin from the seeds of Lathyrus sativus.</title>
        <authorList>
            <person name="Sletten K."/>
            <person name="Kolberg J."/>
        </authorList>
    </citation>
    <scope>PROTEIN SEQUENCE</scope>
</reference>
<sequence length="55" mass="5925">VTSYTLNEVVPLKDVVPEWVRIGFSATTGAEFAAHEVLSWSFHSELGGTSASKQS</sequence>
<evidence type="ECO:0000305" key="1"/>
<comment type="subunit">
    <text>Tetramer of two alpha and two beta chains.</text>
</comment>
<comment type="similarity">
    <text evidence="1">Belongs to the leguminous lectin family.</text>
</comment>
<keyword id="KW-0903">Direct protein sequencing</keyword>
<keyword id="KW-0430">Lectin</keyword>
<keyword id="KW-0465">Mannose-binding</keyword>
<accession>P12308</accession>